<accession>A8ZZU9</accession>
<feature type="chain" id="PRO_1000121877" description="Glutamate-1-semialdehyde 2,1-aminomutase">
    <location>
        <begin position="1"/>
        <end position="427"/>
    </location>
</feature>
<feature type="modified residue" description="N6-(pyridoxal phosphate)lysine" evidence="1">
    <location>
        <position position="267"/>
    </location>
</feature>
<proteinExistence type="inferred from homology"/>
<comment type="catalytic activity">
    <reaction evidence="1">
        <text>(S)-4-amino-5-oxopentanoate = 5-aminolevulinate</text>
        <dbReference type="Rhea" id="RHEA:14265"/>
        <dbReference type="ChEBI" id="CHEBI:57501"/>
        <dbReference type="ChEBI" id="CHEBI:356416"/>
        <dbReference type="EC" id="5.4.3.8"/>
    </reaction>
</comment>
<comment type="cofactor">
    <cofactor evidence="1">
        <name>pyridoxal 5'-phosphate</name>
        <dbReference type="ChEBI" id="CHEBI:597326"/>
    </cofactor>
</comment>
<comment type="pathway">
    <text evidence="1">Porphyrin-containing compound metabolism; protoporphyrin-IX biosynthesis; 5-aminolevulinate from L-glutamyl-tRNA(Glu): step 2/2.</text>
</comment>
<comment type="subunit">
    <text evidence="1">Homodimer.</text>
</comment>
<comment type="subcellular location">
    <subcellularLocation>
        <location evidence="1">Cytoplasm</location>
    </subcellularLocation>
</comment>
<comment type="similarity">
    <text evidence="1">Belongs to the class-III pyridoxal-phosphate-dependent aminotransferase family. HemL subfamily.</text>
</comment>
<keyword id="KW-0963">Cytoplasm</keyword>
<keyword id="KW-0413">Isomerase</keyword>
<keyword id="KW-0627">Porphyrin biosynthesis</keyword>
<keyword id="KW-0663">Pyridoxal phosphate</keyword>
<keyword id="KW-1185">Reference proteome</keyword>
<organism>
    <name type="scientific">Desulfosudis oleivorans (strain DSM 6200 / JCM 39069 / Hxd3)</name>
    <name type="common">Desulfococcus oleovorans</name>
    <dbReference type="NCBI Taxonomy" id="96561"/>
    <lineage>
        <taxon>Bacteria</taxon>
        <taxon>Pseudomonadati</taxon>
        <taxon>Thermodesulfobacteriota</taxon>
        <taxon>Desulfobacteria</taxon>
        <taxon>Desulfobacterales</taxon>
        <taxon>Desulfosudaceae</taxon>
        <taxon>Desulfosudis</taxon>
    </lineage>
</organism>
<gene>
    <name evidence="1" type="primary">hemL</name>
    <name type="ordered locus">Dole_1545</name>
</gene>
<name>GSA_DESOH</name>
<sequence length="427" mass="44905">MNQTRSKALFKEAAVLIPGGVNSPVRAGKAVGTTPLFIDRAQGAEIVDADGNVYIDYIGSWGPMILGHRHSAVMAAIETVLKRGLSFGASTDLEARLARMVADAVPSIEMVRMVNSGTEATMSAIRLARGITGRDGLVKFDGCYHGHADMLLVDAGSGVATQAIPGSPGVPADVVRHTISLPYNNTAALKDCLDRKGEQIACVIVEPVAGNMGMVEPDPGFLSALRKETEKHGCLLIFDEVMSGFRVAYGGAQARYRITPDITCLGKVIGGGMPVGAYGGSRQIMKHIAPEGNIYQAGTLSGNPVAMAAGIATLSELKKPGVYEALEARTRRLADGLARAAADAGVPVQAHAVGAMLGLFFADRPVTDFASAKTSDLSRFAAYYRAMLEKGIFLAPSQFEAIFVSTAHTDDHIDRTVNAAKAVFADL</sequence>
<evidence type="ECO:0000255" key="1">
    <source>
        <dbReference type="HAMAP-Rule" id="MF_00375"/>
    </source>
</evidence>
<dbReference type="EC" id="5.4.3.8" evidence="1"/>
<dbReference type="EMBL" id="CP000859">
    <property type="protein sequence ID" value="ABW67349.1"/>
    <property type="molecule type" value="Genomic_DNA"/>
</dbReference>
<dbReference type="RefSeq" id="WP_012174965.1">
    <property type="nucleotide sequence ID" value="NC_009943.1"/>
</dbReference>
<dbReference type="SMR" id="A8ZZU9"/>
<dbReference type="STRING" id="96561.Dole_1545"/>
<dbReference type="KEGG" id="dol:Dole_1545"/>
<dbReference type="eggNOG" id="COG0001">
    <property type="taxonomic scope" value="Bacteria"/>
</dbReference>
<dbReference type="HOGENOM" id="CLU_016922_1_5_7"/>
<dbReference type="OrthoDB" id="9801834at2"/>
<dbReference type="UniPathway" id="UPA00251">
    <property type="reaction ID" value="UER00317"/>
</dbReference>
<dbReference type="Proteomes" id="UP000008561">
    <property type="component" value="Chromosome"/>
</dbReference>
<dbReference type="GO" id="GO:0005737">
    <property type="term" value="C:cytoplasm"/>
    <property type="evidence" value="ECO:0007669"/>
    <property type="project" value="UniProtKB-SubCell"/>
</dbReference>
<dbReference type="GO" id="GO:0042286">
    <property type="term" value="F:glutamate-1-semialdehyde 2,1-aminomutase activity"/>
    <property type="evidence" value="ECO:0007669"/>
    <property type="project" value="UniProtKB-UniRule"/>
</dbReference>
<dbReference type="GO" id="GO:0030170">
    <property type="term" value="F:pyridoxal phosphate binding"/>
    <property type="evidence" value="ECO:0007669"/>
    <property type="project" value="InterPro"/>
</dbReference>
<dbReference type="GO" id="GO:0008483">
    <property type="term" value="F:transaminase activity"/>
    <property type="evidence" value="ECO:0007669"/>
    <property type="project" value="InterPro"/>
</dbReference>
<dbReference type="GO" id="GO:0006782">
    <property type="term" value="P:protoporphyrinogen IX biosynthetic process"/>
    <property type="evidence" value="ECO:0007669"/>
    <property type="project" value="UniProtKB-UniRule"/>
</dbReference>
<dbReference type="CDD" id="cd00610">
    <property type="entry name" value="OAT_like"/>
    <property type="match status" value="1"/>
</dbReference>
<dbReference type="FunFam" id="3.40.640.10:FF:000021">
    <property type="entry name" value="Glutamate-1-semialdehyde 2,1-aminomutase"/>
    <property type="match status" value="1"/>
</dbReference>
<dbReference type="Gene3D" id="3.90.1150.10">
    <property type="entry name" value="Aspartate Aminotransferase, domain 1"/>
    <property type="match status" value="1"/>
</dbReference>
<dbReference type="Gene3D" id="3.40.640.10">
    <property type="entry name" value="Type I PLP-dependent aspartate aminotransferase-like (Major domain)"/>
    <property type="match status" value="1"/>
</dbReference>
<dbReference type="HAMAP" id="MF_00375">
    <property type="entry name" value="HemL_aminotrans_3"/>
    <property type="match status" value="1"/>
</dbReference>
<dbReference type="InterPro" id="IPR004639">
    <property type="entry name" value="4pyrrol_synth_GluAld_NH2Trfase"/>
</dbReference>
<dbReference type="InterPro" id="IPR005814">
    <property type="entry name" value="Aminotrans_3"/>
</dbReference>
<dbReference type="InterPro" id="IPR049704">
    <property type="entry name" value="Aminotrans_3_PPA_site"/>
</dbReference>
<dbReference type="InterPro" id="IPR015424">
    <property type="entry name" value="PyrdxlP-dep_Trfase"/>
</dbReference>
<dbReference type="InterPro" id="IPR015421">
    <property type="entry name" value="PyrdxlP-dep_Trfase_major"/>
</dbReference>
<dbReference type="InterPro" id="IPR015422">
    <property type="entry name" value="PyrdxlP-dep_Trfase_small"/>
</dbReference>
<dbReference type="NCBIfam" id="TIGR00713">
    <property type="entry name" value="hemL"/>
    <property type="match status" value="1"/>
</dbReference>
<dbReference type="NCBIfam" id="NF000818">
    <property type="entry name" value="PRK00062.1"/>
    <property type="match status" value="1"/>
</dbReference>
<dbReference type="PANTHER" id="PTHR43713">
    <property type="entry name" value="GLUTAMATE-1-SEMIALDEHYDE 2,1-AMINOMUTASE"/>
    <property type="match status" value="1"/>
</dbReference>
<dbReference type="PANTHER" id="PTHR43713:SF3">
    <property type="entry name" value="GLUTAMATE-1-SEMIALDEHYDE 2,1-AMINOMUTASE 1, CHLOROPLASTIC-RELATED"/>
    <property type="match status" value="1"/>
</dbReference>
<dbReference type="Pfam" id="PF00202">
    <property type="entry name" value="Aminotran_3"/>
    <property type="match status" value="1"/>
</dbReference>
<dbReference type="SUPFAM" id="SSF53383">
    <property type="entry name" value="PLP-dependent transferases"/>
    <property type="match status" value="1"/>
</dbReference>
<dbReference type="PROSITE" id="PS00600">
    <property type="entry name" value="AA_TRANSFER_CLASS_3"/>
    <property type="match status" value="1"/>
</dbReference>
<reference key="1">
    <citation type="submission" date="2007-10" db="EMBL/GenBank/DDBJ databases">
        <title>Complete sequence of Desulfococcus oleovorans Hxd3.</title>
        <authorList>
            <consortium name="US DOE Joint Genome Institute"/>
            <person name="Copeland A."/>
            <person name="Lucas S."/>
            <person name="Lapidus A."/>
            <person name="Barry K."/>
            <person name="Glavina del Rio T."/>
            <person name="Dalin E."/>
            <person name="Tice H."/>
            <person name="Pitluck S."/>
            <person name="Kiss H."/>
            <person name="Brettin T."/>
            <person name="Bruce D."/>
            <person name="Detter J.C."/>
            <person name="Han C."/>
            <person name="Schmutz J."/>
            <person name="Larimer F."/>
            <person name="Land M."/>
            <person name="Hauser L."/>
            <person name="Kyrpides N."/>
            <person name="Kim E."/>
            <person name="Wawrik B."/>
            <person name="Richardson P."/>
        </authorList>
    </citation>
    <scope>NUCLEOTIDE SEQUENCE [LARGE SCALE GENOMIC DNA]</scope>
    <source>
        <strain>DSM 6200 / JCM 39069 / Hxd3</strain>
    </source>
</reference>
<protein>
    <recommendedName>
        <fullName evidence="1">Glutamate-1-semialdehyde 2,1-aminomutase</fullName>
        <shortName evidence="1">GSA</shortName>
        <ecNumber evidence="1">5.4.3.8</ecNumber>
    </recommendedName>
    <alternativeName>
        <fullName evidence="1">Glutamate-1-semialdehyde aminotransferase</fullName>
        <shortName evidence="1">GSA-AT</shortName>
    </alternativeName>
</protein>